<feature type="chain" id="PRO_0000269607" description="Hemin import ATP-binding protein HmuV">
    <location>
        <begin position="1"/>
        <end position="277"/>
    </location>
</feature>
<feature type="domain" description="ABC transporter" evidence="1">
    <location>
        <begin position="25"/>
        <end position="260"/>
    </location>
</feature>
<feature type="binding site" evidence="1">
    <location>
        <begin position="57"/>
        <end position="64"/>
    </location>
    <ligand>
        <name>ATP</name>
        <dbReference type="ChEBI" id="CHEBI:30616"/>
    </ligand>
</feature>
<proteinExistence type="inferred from homology"/>
<reference key="1">
    <citation type="journal article" date="2005" name="Science">
        <title>Life at depth: Photobacterium profundum genome sequence and expression analysis.</title>
        <authorList>
            <person name="Vezzi A."/>
            <person name="Campanaro S."/>
            <person name="D'Angelo M."/>
            <person name="Simonato F."/>
            <person name="Vitulo N."/>
            <person name="Lauro F.M."/>
            <person name="Cestaro A."/>
            <person name="Malacrida G."/>
            <person name="Simionati B."/>
            <person name="Cannata N."/>
            <person name="Romualdi C."/>
            <person name="Bartlett D.H."/>
            <person name="Valle G."/>
        </authorList>
    </citation>
    <scope>NUCLEOTIDE SEQUENCE [LARGE SCALE GENOMIC DNA]</scope>
    <source>
        <strain>ATCC BAA-1253 / SS9</strain>
    </source>
</reference>
<evidence type="ECO:0000255" key="1">
    <source>
        <dbReference type="HAMAP-Rule" id="MF_01718"/>
    </source>
</evidence>
<comment type="function">
    <text evidence="1">Part of the ABC transporter complex HmuTUV involved in hemin import. Responsible for energy coupling to the transport system.</text>
</comment>
<comment type="subunit">
    <text evidence="1">The complex is composed of two ATP-binding proteins (HmuV), two transmembrane proteins (HmuU) and a solute-binding protein (HmuT).</text>
</comment>
<comment type="subcellular location">
    <subcellularLocation>
        <location evidence="1">Cell inner membrane</location>
        <topology evidence="1">Peripheral membrane protein</topology>
    </subcellularLocation>
</comment>
<comment type="similarity">
    <text evidence="1">Belongs to the ABC transporter superfamily. Heme (hemin) importer (TC 3.A.1.14.5) family.</text>
</comment>
<name>HMUV_PHOPR</name>
<gene>
    <name evidence="1" type="primary">hmuV</name>
    <name type="synonym">phuV</name>
    <name type="ordered locus">PBPRA2108</name>
</gene>
<protein>
    <recommendedName>
        <fullName evidence="1">Hemin import ATP-binding protein HmuV</fullName>
        <ecNumber evidence="1">7.6.2.-</ecNumber>
    </recommendedName>
</protein>
<sequence>MTFGPQPNSLTPLINNQICKKKVAIHAQGLNLILGGKTLLDNFDIDINAGEVTALLGPNGAGKSSLLKVLCGEIEATGSIEFFGQNRKQWSAKALAKHLGVLPQHSTLNFAFLAHEVVELGGLPLELSNIQTQQITQEKMALVDVCDLSHRLYPSLSGGEKQRVHFARILTQVSQAGDQCVLMLDEPTSALDLAHQHRTLQVAKELASNGAAVIIVLHDLNLAAQYADRLVIVNHGLIQADGTPWQALQPDIIERVYGWPVYISSHPTGDFPVILSH</sequence>
<accession>Q6LQC0</accession>
<dbReference type="EC" id="7.6.2.-" evidence="1"/>
<dbReference type="EMBL" id="CR378669">
    <property type="protein sequence ID" value="CAG20506.1"/>
    <property type="molecule type" value="Genomic_DNA"/>
</dbReference>
<dbReference type="RefSeq" id="WP_011218800.1">
    <property type="nucleotide sequence ID" value="NC_006370.1"/>
</dbReference>
<dbReference type="SMR" id="Q6LQC0"/>
<dbReference type="STRING" id="298386.PBPRA2108"/>
<dbReference type="KEGG" id="ppr:PBPRA2108"/>
<dbReference type="eggNOG" id="COG4559">
    <property type="taxonomic scope" value="Bacteria"/>
</dbReference>
<dbReference type="HOGENOM" id="CLU_000604_1_11_6"/>
<dbReference type="Proteomes" id="UP000000593">
    <property type="component" value="Chromosome 1"/>
</dbReference>
<dbReference type="GO" id="GO:0005886">
    <property type="term" value="C:plasma membrane"/>
    <property type="evidence" value="ECO:0007669"/>
    <property type="project" value="UniProtKB-SubCell"/>
</dbReference>
<dbReference type="GO" id="GO:0005524">
    <property type="term" value="F:ATP binding"/>
    <property type="evidence" value="ECO:0007669"/>
    <property type="project" value="UniProtKB-KW"/>
</dbReference>
<dbReference type="GO" id="GO:0016887">
    <property type="term" value="F:ATP hydrolysis activity"/>
    <property type="evidence" value="ECO:0007669"/>
    <property type="project" value="InterPro"/>
</dbReference>
<dbReference type="CDD" id="cd03214">
    <property type="entry name" value="ABC_Iron-Siderophores_B12_Hemin"/>
    <property type="match status" value="1"/>
</dbReference>
<dbReference type="Gene3D" id="3.40.50.300">
    <property type="entry name" value="P-loop containing nucleotide triphosphate hydrolases"/>
    <property type="match status" value="1"/>
</dbReference>
<dbReference type="InterPro" id="IPR003593">
    <property type="entry name" value="AAA+_ATPase"/>
</dbReference>
<dbReference type="InterPro" id="IPR003439">
    <property type="entry name" value="ABC_transporter-like_ATP-bd"/>
</dbReference>
<dbReference type="InterPro" id="IPR027417">
    <property type="entry name" value="P-loop_NTPase"/>
</dbReference>
<dbReference type="NCBIfam" id="NF010068">
    <property type="entry name" value="PRK13548.1"/>
    <property type="match status" value="1"/>
</dbReference>
<dbReference type="PANTHER" id="PTHR42794">
    <property type="entry name" value="HEMIN IMPORT ATP-BINDING PROTEIN HMUV"/>
    <property type="match status" value="1"/>
</dbReference>
<dbReference type="PANTHER" id="PTHR42794:SF1">
    <property type="entry name" value="HEMIN IMPORT ATP-BINDING PROTEIN HMUV"/>
    <property type="match status" value="1"/>
</dbReference>
<dbReference type="Pfam" id="PF00005">
    <property type="entry name" value="ABC_tran"/>
    <property type="match status" value="1"/>
</dbReference>
<dbReference type="SMART" id="SM00382">
    <property type="entry name" value="AAA"/>
    <property type="match status" value="1"/>
</dbReference>
<dbReference type="SUPFAM" id="SSF52540">
    <property type="entry name" value="P-loop containing nucleoside triphosphate hydrolases"/>
    <property type="match status" value="1"/>
</dbReference>
<dbReference type="PROSITE" id="PS50893">
    <property type="entry name" value="ABC_TRANSPORTER_2"/>
    <property type="match status" value="1"/>
</dbReference>
<dbReference type="PROSITE" id="PS51261">
    <property type="entry name" value="HMUV"/>
    <property type="match status" value="1"/>
</dbReference>
<organism>
    <name type="scientific">Photobacterium profundum (strain SS9)</name>
    <dbReference type="NCBI Taxonomy" id="298386"/>
    <lineage>
        <taxon>Bacteria</taxon>
        <taxon>Pseudomonadati</taxon>
        <taxon>Pseudomonadota</taxon>
        <taxon>Gammaproteobacteria</taxon>
        <taxon>Vibrionales</taxon>
        <taxon>Vibrionaceae</taxon>
        <taxon>Photobacterium</taxon>
    </lineage>
</organism>
<keyword id="KW-0067">ATP-binding</keyword>
<keyword id="KW-0997">Cell inner membrane</keyword>
<keyword id="KW-1003">Cell membrane</keyword>
<keyword id="KW-0472">Membrane</keyword>
<keyword id="KW-0547">Nucleotide-binding</keyword>
<keyword id="KW-1185">Reference proteome</keyword>
<keyword id="KW-1278">Translocase</keyword>
<keyword id="KW-0813">Transport</keyword>